<name>TIG_SHIB3</name>
<gene>
    <name evidence="1" type="primary">tig</name>
    <name type="ordered locus">SbBS512_E0359</name>
</gene>
<proteinExistence type="inferred from homology"/>
<reference key="1">
    <citation type="submission" date="2008-05" db="EMBL/GenBank/DDBJ databases">
        <title>Complete sequence of Shigella boydii serotype 18 strain BS512.</title>
        <authorList>
            <person name="Rasko D.A."/>
            <person name="Rosovitz M."/>
            <person name="Maurelli A.T."/>
            <person name="Myers G."/>
            <person name="Seshadri R."/>
            <person name="Cer R."/>
            <person name="Jiang L."/>
            <person name="Ravel J."/>
            <person name="Sebastian Y."/>
        </authorList>
    </citation>
    <scope>NUCLEOTIDE SEQUENCE [LARGE SCALE GENOMIC DNA]</scope>
    <source>
        <strain>CDC 3083-94 / BS512</strain>
    </source>
</reference>
<accession>B2U4P1</accession>
<comment type="function">
    <text evidence="1">Involved in protein export. Acts as a chaperone by maintaining the newly synthesized protein in an open conformation. Functions as a peptidyl-prolyl cis-trans isomerase.</text>
</comment>
<comment type="catalytic activity">
    <reaction evidence="1">
        <text>[protein]-peptidylproline (omega=180) = [protein]-peptidylproline (omega=0)</text>
        <dbReference type="Rhea" id="RHEA:16237"/>
        <dbReference type="Rhea" id="RHEA-COMP:10747"/>
        <dbReference type="Rhea" id="RHEA-COMP:10748"/>
        <dbReference type="ChEBI" id="CHEBI:83833"/>
        <dbReference type="ChEBI" id="CHEBI:83834"/>
        <dbReference type="EC" id="5.2.1.8"/>
    </reaction>
</comment>
<comment type="subunit">
    <text evidence="1">Homodimer and monomer. In vivo most of the ribosomes are in complex with monomeric TF. Uncomplexed TF, however, is in a monomer-dimer equilibrium with approximately two thirds of TF existing in a dimeric state.</text>
</comment>
<comment type="subcellular location">
    <subcellularLocation>
        <location>Cytoplasm</location>
    </subcellularLocation>
    <text evidence="1">About half TF is bound to the ribosome near the polypeptide exit tunnel while the other half is free in the cytoplasm.</text>
</comment>
<comment type="domain">
    <text evidence="1">Consists of 3 domains; the N-terminus binds the ribosome, the middle domain has PPIase activity, while the C-terminus has intrinsic chaperone activity on its own.</text>
</comment>
<comment type="similarity">
    <text evidence="1">Belongs to the FKBP-type PPIase family. Tig subfamily.</text>
</comment>
<keyword id="KW-0131">Cell cycle</keyword>
<keyword id="KW-0132">Cell division</keyword>
<keyword id="KW-0143">Chaperone</keyword>
<keyword id="KW-0963">Cytoplasm</keyword>
<keyword id="KW-0413">Isomerase</keyword>
<keyword id="KW-1185">Reference proteome</keyword>
<keyword id="KW-0697">Rotamase</keyword>
<evidence type="ECO:0000255" key="1">
    <source>
        <dbReference type="HAMAP-Rule" id="MF_00303"/>
    </source>
</evidence>
<sequence>MQVSVETTQGLGRRVTITIAADSIETAVKSELVNVAKKVRIDGFRKGKVPMNIVAQRYGASVRQDVLGDLMSRNFIDAIIKEKINPAGAPTYVPGEYKLGEDFTYSVEFEVYPEVELQGLEAIEVEKPIVEVTDADVDGMLDTLRKQQATWKEKDGAVEAEDRVTIDFTGSVDSEEFEGGKASDFVLAMGQGRMIPGFEDGIKGHKAGEEFTIDVTFPEEYHAENLKGKAAKFAINLKKVEERELPELTAEFIKRFGVEDGSVEGLRAEVRKNMERELKSAIRNRVKSQAIEGLVKANDIDVPAALIDSEIDVLRRQAAQRFGGNEKQALELPRELFEEQAKRRVVVGLLLGEVIRTNELKADEERVKGLIEEMASAYEDPKEVIEFYSKNKELMDNMRNVALEEQAVEAVLAKAKVTEKETTFNELMNQQA</sequence>
<feature type="chain" id="PRO_1000115582" description="Trigger factor">
    <location>
        <begin position="1"/>
        <end position="432"/>
    </location>
</feature>
<feature type="domain" description="PPIase FKBP-type" evidence="1">
    <location>
        <begin position="161"/>
        <end position="246"/>
    </location>
</feature>
<organism>
    <name type="scientific">Shigella boydii serotype 18 (strain CDC 3083-94 / BS512)</name>
    <dbReference type="NCBI Taxonomy" id="344609"/>
    <lineage>
        <taxon>Bacteria</taxon>
        <taxon>Pseudomonadati</taxon>
        <taxon>Pseudomonadota</taxon>
        <taxon>Gammaproteobacteria</taxon>
        <taxon>Enterobacterales</taxon>
        <taxon>Enterobacteriaceae</taxon>
        <taxon>Shigella</taxon>
    </lineage>
</organism>
<protein>
    <recommendedName>
        <fullName evidence="1">Trigger factor</fullName>
        <shortName evidence="1">TF</shortName>
        <ecNumber evidence="1">5.2.1.8</ecNumber>
    </recommendedName>
    <alternativeName>
        <fullName evidence="1">PPIase</fullName>
    </alternativeName>
</protein>
<dbReference type="EC" id="5.2.1.8" evidence="1"/>
<dbReference type="EMBL" id="CP001063">
    <property type="protein sequence ID" value="ACD08011.1"/>
    <property type="molecule type" value="Genomic_DNA"/>
</dbReference>
<dbReference type="RefSeq" id="WP_001198392.1">
    <property type="nucleotide sequence ID" value="NC_010658.1"/>
</dbReference>
<dbReference type="SMR" id="B2U4P1"/>
<dbReference type="STRING" id="344609.SbBS512_E0359"/>
<dbReference type="KEGG" id="sbc:SbBS512_E0359"/>
<dbReference type="HOGENOM" id="CLU_033058_2_0_6"/>
<dbReference type="Proteomes" id="UP000001030">
    <property type="component" value="Chromosome"/>
</dbReference>
<dbReference type="GO" id="GO:0005737">
    <property type="term" value="C:cytoplasm"/>
    <property type="evidence" value="ECO:0007669"/>
    <property type="project" value="UniProtKB-SubCell"/>
</dbReference>
<dbReference type="GO" id="GO:0003755">
    <property type="term" value="F:peptidyl-prolyl cis-trans isomerase activity"/>
    <property type="evidence" value="ECO:0007669"/>
    <property type="project" value="UniProtKB-UniRule"/>
</dbReference>
<dbReference type="GO" id="GO:0044183">
    <property type="term" value="F:protein folding chaperone"/>
    <property type="evidence" value="ECO:0007669"/>
    <property type="project" value="TreeGrafter"/>
</dbReference>
<dbReference type="GO" id="GO:0043022">
    <property type="term" value="F:ribosome binding"/>
    <property type="evidence" value="ECO:0007669"/>
    <property type="project" value="TreeGrafter"/>
</dbReference>
<dbReference type="GO" id="GO:0051083">
    <property type="term" value="P:'de novo' cotranslational protein folding"/>
    <property type="evidence" value="ECO:0007669"/>
    <property type="project" value="TreeGrafter"/>
</dbReference>
<dbReference type="GO" id="GO:0051301">
    <property type="term" value="P:cell division"/>
    <property type="evidence" value="ECO:0007669"/>
    <property type="project" value="UniProtKB-KW"/>
</dbReference>
<dbReference type="GO" id="GO:0061077">
    <property type="term" value="P:chaperone-mediated protein folding"/>
    <property type="evidence" value="ECO:0007669"/>
    <property type="project" value="TreeGrafter"/>
</dbReference>
<dbReference type="GO" id="GO:0015031">
    <property type="term" value="P:protein transport"/>
    <property type="evidence" value="ECO:0007669"/>
    <property type="project" value="UniProtKB-UniRule"/>
</dbReference>
<dbReference type="GO" id="GO:0043335">
    <property type="term" value="P:protein unfolding"/>
    <property type="evidence" value="ECO:0007669"/>
    <property type="project" value="TreeGrafter"/>
</dbReference>
<dbReference type="FunFam" id="1.10.3120.10:FF:000001">
    <property type="entry name" value="Trigger factor"/>
    <property type="match status" value="1"/>
</dbReference>
<dbReference type="FunFam" id="3.10.50.40:FF:000001">
    <property type="entry name" value="Trigger factor"/>
    <property type="match status" value="1"/>
</dbReference>
<dbReference type="FunFam" id="3.30.70.1050:FF:000001">
    <property type="entry name" value="Trigger factor"/>
    <property type="match status" value="1"/>
</dbReference>
<dbReference type="Gene3D" id="3.10.50.40">
    <property type="match status" value="1"/>
</dbReference>
<dbReference type="Gene3D" id="3.30.70.1050">
    <property type="entry name" value="Trigger factor ribosome-binding domain"/>
    <property type="match status" value="1"/>
</dbReference>
<dbReference type="Gene3D" id="1.10.3120.10">
    <property type="entry name" value="Trigger factor, C-terminal domain"/>
    <property type="match status" value="1"/>
</dbReference>
<dbReference type="HAMAP" id="MF_00303">
    <property type="entry name" value="Trigger_factor_Tig"/>
    <property type="match status" value="1"/>
</dbReference>
<dbReference type="InterPro" id="IPR046357">
    <property type="entry name" value="PPIase_dom_sf"/>
</dbReference>
<dbReference type="InterPro" id="IPR001179">
    <property type="entry name" value="PPIase_FKBP_dom"/>
</dbReference>
<dbReference type="InterPro" id="IPR005215">
    <property type="entry name" value="Trig_fac"/>
</dbReference>
<dbReference type="InterPro" id="IPR008880">
    <property type="entry name" value="Trigger_fac_C"/>
</dbReference>
<dbReference type="InterPro" id="IPR037041">
    <property type="entry name" value="Trigger_fac_C_sf"/>
</dbReference>
<dbReference type="InterPro" id="IPR008881">
    <property type="entry name" value="Trigger_fac_ribosome-bd_bac"/>
</dbReference>
<dbReference type="InterPro" id="IPR036611">
    <property type="entry name" value="Trigger_fac_ribosome-bd_sf"/>
</dbReference>
<dbReference type="InterPro" id="IPR027304">
    <property type="entry name" value="Trigger_fact/SurA_dom_sf"/>
</dbReference>
<dbReference type="NCBIfam" id="TIGR00115">
    <property type="entry name" value="tig"/>
    <property type="match status" value="1"/>
</dbReference>
<dbReference type="PANTHER" id="PTHR30560">
    <property type="entry name" value="TRIGGER FACTOR CHAPERONE AND PEPTIDYL-PROLYL CIS/TRANS ISOMERASE"/>
    <property type="match status" value="1"/>
</dbReference>
<dbReference type="PANTHER" id="PTHR30560:SF3">
    <property type="entry name" value="TRIGGER FACTOR-LIKE PROTEIN TIG, CHLOROPLASTIC"/>
    <property type="match status" value="1"/>
</dbReference>
<dbReference type="Pfam" id="PF00254">
    <property type="entry name" value="FKBP_C"/>
    <property type="match status" value="1"/>
</dbReference>
<dbReference type="Pfam" id="PF05698">
    <property type="entry name" value="Trigger_C"/>
    <property type="match status" value="1"/>
</dbReference>
<dbReference type="Pfam" id="PF05697">
    <property type="entry name" value="Trigger_N"/>
    <property type="match status" value="1"/>
</dbReference>
<dbReference type="PIRSF" id="PIRSF003095">
    <property type="entry name" value="Trigger_factor"/>
    <property type="match status" value="1"/>
</dbReference>
<dbReference type="SUPFAM" id="SSF54534">
    <property type="entry name" value="FKBP-like"/>
    <property type="match status" value="1"/>
</dbReference>
<dbReference type="SUPFAM" id="SSF109998">
    <property type="entry name" value="Triger factor/SurA peptide-binding domain-like"/>
    <property type="match status" value="1"/>
</dbReference>
<dbReference type="SUPFAM" id="SSF102735">
    <property type="entry name" value="Trigger factor ribosome-binding domain"/>
    <property type="match status" value="1"/>
</dbReference>
<dbReference type="PROSITE" id="PS50059">
    <property type="entry name" value="FKBP_PPIASE"/>
    <property type="match status" value="1"/>
</dbReference>